<reference key="1">
    <citation type="journal article" date="2008" name="Science">
        <title>Identification of SLEEPLESS, a sleep-promoting factor.</title>
        <authorList>
            <person name="Koh K."/>
            <person name="Joiner W.J."/>
            <person name="Wu M.N."/>
            <person name="Yue Z."/>
            <person name="Smith C.J."/>
            <person name="Sehgal A."/>
        </authorList>
    </citation>
    <scope>NUCLEOTIDE SEQUENCE [MRNA]</scope>
    <scope>FUNCTION</scope>
    <scope>GPI-ANCHOR AT ASN-127</scope>
    <scope>GLYCOSYLATION</scope>
    <scope>DISRUPTION PHENOTYPE</scope>
    <scope>TISSUE SPECIFICITY</scope>
</reference>
<reference key="2">
    <citation type="journal article" date="2000" name="Science">
        <title>The genome sequence of Drosophila melanogaster.</title>
        <authorList>
            <person name="Adams M.D."/>
            <person name="Celniker S.E."/>
            <person name="Holt R.A."/>
            <person name="Evans C.A."/>
            <person name="Gocayne J.D."/>
            <person name="Amanatides P.G."/>
            <person name="Scherer S.E."/>
            <person name="Li P.W."/>
            <person name="Hoskins R.A."/>
            <person name="Galle R.F."/>
            <person name="George R.A."/>
            <person name="Lewis S.E."/>
            <person name="Richards S."/>
            <person name="Ashburner M."/>
            <person name="Henderson S.N."/>
            <person name="Sutton G.G."/>
            <person name="Wortman J.R."/>
            <person name="Yandell M.D."/>
            <person name="Zhang Q."/>
            <person name="Chen L.X."/>
            <person name="Brandon R.C."/>
            <person name="Rogers Y.-H.C."/>
            <person name="Blazej R.G."/>
            <person name="Champe M."/>
            <person name="Pfeiffer B.D."/>
            <person name="Wan K.H."/>
            <person name="Doyle C."/>
            <person name="Baxter E.G."/>
            <person name="Helt G."/>
            <person name="Nelson C.R."/>
            <person name="Miklos G.L.G."/>
            <person name="Abril J.F."/>
            <person name="Agbayani A."/>
            <person name="An H.-J."/>
            <person name="Andrews-Pfannkoch C."/>
            <person name="Baldwin D."/>
            <person name="Ballew R.M."/>
            <person name="Basu A."/>
            <person name="Baxendale J."/>
            <person name="Bayraktaroglu L."/>
            <person name="Beasley E.M."/>
            <person name="Beeson K.Y."/>
            <person name="Benos P.V."/>
            <person name="Berman B.P."/>
            <person name="Bhandari D."/>
            <person name="Bolshakov S."/>
            <person name="Borkova D."/>
            <person name="Botchan M.R."/>
            <person name="Bouck J."/>
            <person name="Brokstein P."/>
            <person name="Brottier P."/>
            <person name="Burtis K.C."/>
            <person name="Busam D.A."/>
            <person name="Butler H."/>
            <person name="Cadieu E."/>
            <person name="Center A."/>
            <person name="Chandra I."/>
            <person name="Cherry J.M."/>
            <person name="Cawley S."/>
            <person name="Dahlke C."/>
            <person name="Davenport L.B."/>
            <person name="Davies P."/>
            <person name="de Pablos B."/>
            <person name="Delcher A."/>
            <person name="Deng Z."/>
            <person name="Mays A.D."/>
            <person name="Dew I."/>
            <person name="Dietz S.M."/>
            <person name="Dodson K."/>
            <person name="Doup L.E."/>
            <person name="Downes M."/>
            <person name="Dugan-Rocha S."/>
            <person name="Dunkov B.C."/>
            <person name="Dunn P."/>
            <person name="Durbin K.J."/>
            <person name="Evangelista C.C."/>
            <person name="Ferraz C."/>
            <person name="Ferriera S."/>
            <person name="Fleischmann W."/>
            <person name="Fosler C."/>
            <person name="Gabrielian A.E."/>
            <person name="Garg N.S."/>
            <person name="Gelbart W.M."/>
            <person name="Glasser K."/>
            <person name="Glodek A."/>
            <person name="Gong F."/>
            <person name="Gorrell J.H."/>
            <person name="Gu Z."/>
            <person name="Guan P."/>
            <person name="Harris M."/>
            <person name="Harris N.L."/>
            <person name="Harvey D.A."/>
            <person name="Heiman T.J."/>
            <person name="Hernandez J.R."/>
            <person name="Houck J."/>
            <person name="Hostin D."/>
            <person name="Houston K.A."/>
            <person name="Howland T.J."/>
            <person name="Wei M.-H."/>
            <person name="Ibegwam C."/>
            <person name="Jalali M."/>
            <person name="Kalush F."/>
            <person name="Karpen G.H."/>
            <person name="Ke Z."/>
            <person name="Kennison J.A."/>
            <person name="Ketchum K.A."/>
            <person name="Kimmel B.E."/>
            <person name="Kodira C.D."/>
            <person name="Kraft C.L."/>
            <person name="Kravitz S."/>
            <person name="Kulp D."/>
            <person name="Lai Z."/>
            <person name="Lasko P."/>
            <person name="Lei Y."/>
            <person name="Levitsky A.A."/>
            <person name="Li J.H."/>
            <person name="Li Z."/>
            <person name="Liang Y."/>
            <person name="Lin X."/>
            <person name="Liu X."/>
            <person name="Mattei B."/>
            <person name="McIntosh T.C."/>
            <person name="McLeod M.P."/>
            <person name="McPherson D."/>
            <person name="Merkulov G."/>
            <person name="Milshina N.V."/>
            <person name="Mobarry C."/>
            <person name="Morris J."/>
            <person name="Moshrefi A."/>
            <person name="Mount S.M."/>
            <person name="Moy M."/>
            <person name="Murphy B."/>
            <person name="Murphy L."/>
            <person name="Muzny D.M."/>
            <person name="Nelson D.L."/>
            <person name="Nelson D.R."/>
            <person name="Nelson K.A."/>
            <person name="Nixon K."/>
            <person name="Nusskern D.R."/>
            <person name="Pacleb J.M."/>
            <person name="Palazzolo M."/>
            <person name="Pittman G.S."/>
            <person name="Pan S."/>
            <person name="Pollard J."/>
            <person name="Puri V."/>
            <person name="Reese M.G."/>
            <person name="Reinert K."/>
            <person name="Remington K."/>
            <person name="Saunders R.D.C."/>
            <person name="Scheeler F."/>
            <person name="Shen H."/>
            <person name="Shue B.C."/>
            <person name="Siden-Kiamos I."/>
            <person name="Simpson M."/>
            <person name="Skupski M.P."/>
            <person name="Smith T.J."/>
            <person name="Spier E."/>
            <person name="Spradling A.C."/>
            <person name="Stapleton M."/>
            <person name="Strong R."/>
            <person name="Sun E."/>
            <person name="Svirskas R."/>
            <person name="Tector C."/>
            <person name="Turner R."/>
            <person name="Venter E."/>
            <person name="Wang A.H."/>
            <person name="Wang X."/>
            <person name="Wang Z.-Y."/>
            <person name="Wassarman D.A."/>
            <person name="Weinstock G.M."/>
            <person name="Weissenbach J."/>
            <person name="Williams S.M."/>
            <person name="Woodage T."/>
            <person name="Worley K.C."/>
            <person name="Wu D."/>
            <person name="Yang S."/>
            <person name="Yao Q.A."/>
            <person name="Ye J."/>
            <person name="Yeh R.-F."/>
            <person name="Zaveri J.S."/>
            <person name="Zhan M."/>
            <person name="Zhang G."/>
            <person name="Zhao Q."/>
            <person name="Zheng L."/>
            <person name="Zheng X.H."/>
            <person name="Zhong F.N."/>
            <person name="Zhong W."/>
            <person name="Zhou X."/>
            <person name="Zhu S.C."/>
            <person name="Zhu X."/>
            <person name="Smith H.O."/>
            <person name="Gibbs R.A."/>
            <person name="Myers E.W."/>
            <person name="Rubin G.M."/>
            <person name="Venter J.C."/>
        </authorList>
    </citation>
    <scope>NUCLEOTIDE SEQUENCE [LARGE SCALE GENOMIC DNA]</scope>
    <source>
        <strain>Berkeley</strain>
    </source>
</reference>
<reference key="3">
    <citation type="journal article" date="2002" name="Genome Biol.">
        <title>Annotation of the Drosophila melanogaster euchromatic genome: a systematic review.</title>
        <authorList>
            <person name="Misra S."/>
            <person name="Crosby M.A."/>
            <person name="Mungall C.J."/>
            <person name="Matthews B.B."/>
            <person name="Campbell K.S."/>
            <person name="Hradecky P."/>
            <person name="Huang Y."/>
            <person name="Kaminker J.S."/>
            <person name="Millburn G.H."/>
            <person name="Prochnik S.E."/>
            <person name="Smith C.D."/>
            <person name="Tupy J.L."/>
            <person name="Whitfield E.J."/>
            <person name="Bayraktaroglu L."/>
            <person name="Berman B.P."/>
            <person name="Bettencourt B.R."/>
            <person name="Celniker S.E."/>
            <person name="de Grey A.D.N.J."/>
            <person name="Drysdale R.A."/>
            <person name="Harris N.L."/>
            <person name="Richter J."/>
            <person name="Russo S."/>
            <person name="Schroeder A.J."/>
            <person name="Shu S.Q."/>
            <person name="Stapleton M."/>
            <person name="Yamada C."/>
            <person name="Ashburner M."/>
            <person name="Gelbart W.M."/>
            <person name="Rubin G.M."/>
            <person name="Lewis S.E."/>
        </authorList>
    </citation>
    <scope>GENOME REANNOTATION</scope>
    <source>
        <strain>Berkeley</strain>
    </source>
</reference>
<reference key="4">
    <citation type="journal article" date="2002" name="Genome Biol.">
        <title>A Drosophila full-length cDNA resource.</title>
        <authorList>
            <person name="Stapleton M."/>
            <person name="Carlson J.W."/>
            <person name="Brokstein P."/>
            <person name="Yu C."/>
            <person name="Champe M."/>
            <person name="George R.A."/>
            <person name="Guarin H."/>
            <person name="Kronmiller B."/>
            <person name="Pacleb J.M."/>
            <person name="Park S."/>
            <person name="Wan K.H."/>
            <person name="Rubin G.M."/>
            <person name="Celniker S.E."/>
        </authorList>
    </citation>
    <scope>NUCLEOTIDE SEQUENCE [LARGE SCALE MRNA]</scope>
    <source>
        <strain>Berkeley</strain>
        <tissue>Head</tissue>
    </source>
</reference>
<reference key="5">
    <citation type="journal article" date="1996" name="Genome">
        <title>Genetic analysis of oxygen defense mechanisms in Drosophila melanogaster and identification of a novel behavioural mutant with a Shaker phenotype.</title>
        <authorList>
            <person name="Humphreys J.M."/>
            <person name="Duyf B."/>
            <person name="Joiner M.L."/>
            <person name="Phillips J.P."/>
            <person name="Hilliker A.J."/>
        </authorList>
    </citation>
    <scope>DISRUPTION PHENOTYPE</scope>
</reference>
<reference key="6">
    <citation type="journal article" date="2000" name="J. Neurosci.">
        <title>A novel leg-shaking Drosophila mutant defective in a voltage-gated K(+)current and hypersensitive to reactive oxygen species.</title>
        <authorList>
            <person name="Wang J.W."/>
            <person name="Humphreys J.M."/>
            <person name="Phillips J.P."/>
            <person name="Hilliker A.J."/>
            <person name="Wu C.F."/>
        </authorList>
    </citation>
    <scope>FUNCTION</scope>
    <scope>DISRUPTION PHENOTYPE</scope>
</reference>
<reference key="7">
    <citation type="journal article" date="2010" name="J. Neurogenet.">
        <title>Modulation of the frequency response of Shaker potassium channels by the quiver peptide suggesting a novel extracellular interaction mechanism.</title>
        <authorList>
            <person name="Wang J.W."/>
            <person name="Wu C.F."/>
        </authorList>
    </citation>
    <scope>FUNCTION</scope>
</reference>
<reference key="8">
    <citation type="journal article" date="2010" name="Nat. Neurosci.">
        <title>SLEEPLESS, a Ly-6/neurotoxin family member, regulates the levels, localization and activity of Shaker.</title>
        <authorList>
            <person name="Wu M.N."/>
            <person name="Joiner W.J."/>
            <person name="Dean T."/>
            <person name="Yue Z."/>
            <person name="Smith C.J."/>
            <person name="Chen D."/>
            <person name="Hoshi T."/>
            <person name="Sehgal A."/>
            <person name="Koh K."/>
        </authorList>
    </citation>
    <scope>FUNCTION</scope>
    <scope>INTERACTION WITH SH</scope>
    <scope>TISSUE SPECIFICITY</scope>
</reference>
<reference key="9">
    <citation type="journal article" date="2011" name="J. Neurosci.">
        <title>Drosophila QVR/SSS modulates the activation and C-type inactivation kinetics of Shaker K(+) channels.</title>
        <authorList>
            <person name="Dean T."/>
            <person name="Xu R."/>
            <person name="Joiner W."/>
            <person name="Sehgal A."/>
            <person name="Hoshi T."/>
        </authorList>
    </citation>
    <scope>FUNCTION</scope>
    <scope>SUBCELLULAR LOCATION</scope>
</reference>
<reference key="10">
    <citation type="journal article" date="2014" name="Curr. Biol.">
        <title>SLEEPLESS is a bifunctional regulator of excitability and cholinergic synaptic transmission.</title>
        <authorList>
            <person name="Wu M."/>
            <person name="Robinson J.E."/>
            <person name="Joiner W.J."/>
        </authorList>
    </citation>
    <scope>FUNCTION</scope>
    <scope>INTERACTION WITH SH AND NACHRALPHA3</scope>
    <scope>TISSUE SPECIFICITY</scope>
    <scope>DOMAIN</scope>
</reference>
<reference key="11">
    <citation type="journal article" date="2014" name="Proc. Natl. Acad. Sci. U.S.A.">
        <title>Day-night cycles and the sleep-promoting factor, Sleepless, affect stem cell activity in the Drosophila testis.</title>
        <authorList>
            <person name="Tulina N.M."/>
            <person name="Chen W.F."/>
            <person name="Chen J.H."/>
            <person name="Sowcik M."/>
            <person name="Sehgal A."/>
        </authorList>
    </citation>
    <scope>DISRUPTION PHENOTYPE</scope>
</reference>
<reference key="12">
    <citation type="journal article" date="2016" name="PLoS ONE">
        <title>Structural Analysis and Deletion Mutagenesis Define Regions of QUIVER/SLEEPLESS that Are Responsible for Interactions with Shaker-Type Potassium Channels and Nicotinic Acetylcholine Receptors.</title>
        <authorList>
            <person name="Wu M."/>
            <person name="Liu C.Z."/>
            <person name="Joiner W.J."/>
        </authorList>
    </citation>
    <scope>FUNCTION</scope>
    <scope>INTERACTION WITH SH AND NACHRALPHA3</scope>
    <scope>SUBCELLULAR LOCATION</scope>
    <scope>DOMAIN</scope>
    <scope>GLYCOSYLATION AT ASN-57</scope>
</reference>
<reference key="13">
    <citation type="journal article" date="2017" name="J. Neurogenet.">
        <title>Generation and characterization of new alleles of quiver (qvr) that encodes an extracellular modulator of the Shaker potassium channel.</title>
        <authorList>
            <person name="Ruan H."/>
            <person name="Ueda A."/>
            <person name="Xing X."/>
            <person name="Wan X."/>
            <person name="Strub B."/>
            <person name="Mukai S."/>
            <person name="Certel K."/>
            <person name="Green D."/>
            <person name="Belozerov K."/>
            <person name="Yao W.D."/>
            <person name="Johnson W."/>
            <person name="Jung-Ching Lin J."/>
            <person name="Hilliker A.J."/>
            <person name="Wu C.F."/>
        </authorList>
    </citation>
    <scope>FUNCTION</scope>
    <scope>DISRUPTION PHENOTYPE</scope>
</reference>
<accession>B5A5T4</accession>
<accession>A1Z8M0</accession>
<accession>B7YZF3</accession>
<accession>Q8SXP9</accession>
<organism evidence="19">
    <name type="scientific">Drosophila melanogaster</name>
    <name type="common">Fruit fly</name>
    <dbReference type="NCBI Taxonomy" id="7227"/>
    <lineage>
        <taxon>Eukaryota</taxon>
        <taxon>Metazoa</taxon>
        <taxon>Ecdysozoa</taxon>
        <taxon>Arthropoda</taxon>
        <taxon>Hexapoda</taxon>
        <taxon>Insecta</taxon>
        <taxon>Pterygota</taxon>
        <taxon>Neoptera</taxon>
        <taxon>Endopterygota</taxon>
        <taxon>Diptera</taxon>
        <taxon>Brachycera</taxon>
        <taxon>Muscomorpha</taxon>
        <taxon>Ephydroidea</taxon>
        <taxon>Drosophilidae</taxon>
        <taxon>Drosophila</taxon>
        <taxon>Sophophora</taxon>
    </lineage>
</organism>
<sequence>MWTQRNAVGNWLLVLTAVIGFLTFIWIPQTSAECQTRSIYCYECDSWTDARCKDPFNYTALPRDQPPLMTCNGCCVKMVRHQRSPYEVVRRMCTSQLQINLFMVDHVCMMESSGNGHMCFCEEDMCNSSKNLHTNGCQLHLIPIAVAVSWLMGQLLSR</sequence>
<keyword id="KW-0090">Biological rhythms</keyword>
<keyword id="KW-1003">Cell membrane</keyword>
<keyword id="KW-1015">Disulfide bond</keyword>
<keyword id="KW-0325">Glycoprotein</keyword>
<keyword id="KW-0336">GPI-anchor</keyword>
<keyword id="KW-0449">Lipoprotein</keyword>
<keyword id="KW-0472">Membrane</keyword>
<keyword id="KW-1185">Reference proteome</keyword>
<keyword id="KW-0732">Signal</keyword>
<keyword id="KW-0812">Transmembrane</keyword>
<keyword id="KW-1133">Transmembrane helix</keyword>
<dbReference type="EMBL" id="EU816195">
    <property type="protein sequence ID" value="ACF58241.1"/>
    <property type="molecule type" value="mRNA"/>
</dbReference>
<dbReference type="EMBL" id="AE013599">
    <property type="protein sequence ID" value="ACL83100.1"/>
    <property type="molecule type" value="Genomic_DNA"/>
</dbReference>
<dbReference type="EMBL" id="AY089495">
    <property type="protein sequence ID" value="AAL90233.1"/>
    <property type="status" value="ALT_SEQ"/>
    <property type="molecule type" value="mRNA"/>
</dbReference>
<dbReference type="RefSeq" id="NP_001137646.1">
    <property type="nucleotide sequence ID" value="NM_001144174.3"/>
</dbReference>
<dbReference type="BioGRID" id="77570">
    <property type="interactions" value="9"/>
</dbReference>
<dbReference type="FunCoup" id="B5A5T4">
    <property type="interactions" value="44"/>
</dbReference>
<dbReference type="STRING" id="7227.FBpp0113067"/>
<dbReference type="TCDB" id="8.A.231.2.1">
    <property type="family name" value="the quiver/sleepless//dreammist (qsd) family"/>
</dbReference>
<dbReference type="GlyCosmos" id="B5A5T4">
    <property type="glycosylation" value="1 site, No reported glycans"/>
</dbReference>
<dbReference type="GlyGen" id="B5A5T4">
    <property type="glycosylation" value="1 site"/>
</dbReference>
<dbReference type="PaxDb" id="7227-FBpp0113067"/>
<dbReference type="EnsemblMetazoa" id="FBtr0114575">
    <property type="protein sequence ID" value="FBpp0113067"/>
    <property type="gene ID" value="FBgn0260499"/>
</dbReference>
<dbReference type="GeneID" id="2768718"/>
<dbReference type="KEGG" id="dme:Dmel_CG33472"/>
<dbReference type="UCSC" id="CG33472-RA">
    <property type="organism name" value="d. melanogaster"/>
</dbReference>
<dbReference type="UCSC" id="CG33472-RB">
    <property type="organism name" value="d. melanogaster"/>
</dbReference>
<dbReference type="AGR" id="FB:FBgn0260499"/>
<dbReference type="CTD" id="2768718"/>
<dbReference type="FlyBase" id="FBgn0260499">
    <property type="gene designation" value="qvr"/>
</dbReference>
<dbReference type="VEuPathDB" id="VectorBase:FBgn0260499"/>
<dbReference type="eggNOG" id="ENOG502S199">
    <property type="taxonomic scope" value="Eukaryota"/>
</dbReference>
<dbReference type="HOGENOM" id="CLU_137010_0_0_1"/>
<dbReference type="InParanoid" id="B5A5T4"/>
<dbReference type="OMA" id="FCERDNC"/>
<dbReference type="OrthoDB" id="9991292at2759"/>
<dbReference type="PhylomeDB" id="B5A5T4"/>
<dbReference type="BioGRID-ORCS" id="2768718">
    <property type="hits" value="0 hits in 1 CRISPR screen"/>
</dbReference>
<dbReference type="ChiTaRS" id="qvr">
    <property type="organism name" value="fly"/>
</dbReference>
<dbReference type="GenomeRNAi" id="2768718"/>
<dbReference type="PRO" id="PR:B5A5T4"/>
<dbReference type="Proteomes" id="UP000000803">
    <property type="component" value="Chromosome 2R"/>
</dbReference>
<dbReference type="Bgee" id="FBgn0260499">
    <property type="expression patterns" value="Expressed in transmedullary neuron Tm2 (Drosophila) in insect head and 227 other cell types or tissues"/>
</dbReference>
<dbReference type="ExpressionAtlas" id="B5A5T4">
    <property type="expression patterns" value="baseline and differential"/>
</dbReference>
<dbReference type="GO" id="GO:0009897">
    <property type="term" value="C:external side of plasma membrane"/>
    <property type="evidence" value="ECO:0000314"/>
    <property type="project" value="FlyBase"/>
</dbReference>
<dbReference type="GO" id="GO:0045121">
    <property type="term" value="C:membrane raft"/>
    <property type="evidence" value="ECO:0007669"/>
    <property type="project" value="UniProtKB-SubCell"/>
</dbReference>
<dbReference type="GO" id="GO:0005886">
    <property type="term" value="C:plasma membrane"/>
    <property type="evidence" value="ECO:0000314"/>
    <property type="project" value="UniProtKB"/>
</dbReference>
<dbReference type="GO" id="GO:0030550">
    <property type="term" value="F:acetylcholine receptor inhibitor activity"/>
    <property type="evidence" value="ECO:0000316"/>
    <property type="project" value="FlyBase"/>
</dbReference>
<dbReference type="GO" id="GO:0034235">
    <property type="term" value="F:GPI anchor binding"/>
    <property type="evidence" value="ECO:0000314"/>
    <property type="project" value="UniProtKB"/>
</dbReference>
<dbReference type="GO" id="GO:0099104">
    <property type="term" value="F:potassium channel activator activity"/>
    <property type="evidence" value="ECO:0000314"/>
    <property type="project" value="FlyBase"/>
</dbReference>
<dbReference type="GO" id="GO:0045837">
    <property type="term" value="P:negative regulation of membrane potential"/>
    <property type="evidence" value="ECO:0000316"/>
    <property type="project" value="FlyBase"/>
</dbReference>
<dbReference type="GO" id="GO:0045938">
    <property type="term" value="P:positive regulation of circadian sleep/wake cycle, sleep"/>
    <property type="evidence" value="ECO:0000315"/>
    <property type="project" value="FlyBase"/>
</dbReference>
<dbReference type="GO" id="GO:0045187">
    <property type="term" value="P:regulation of circadian sleep/wake cycle, sleep"/>
    <property type="evidence" value="ECO:0000315"/>
    <property type="project" value="UniProtKB"/>
</dbReference>
<dbReference type="GO" id="GO:0032222">
    <property type="term" value="P:regulation of synaptic transmission, cholinergic"/>
    <property type="evidence" value="ECO:0000315"/>
    <property type="project" value="FlyBase"/>
</dbReference>
<dbReference type="GO" id="GO:0048511">
    <property type="term" value="P:rhythmic process"/>
    <property type="evidence" value="ECO:0007669"/>
    <property type="project" value="UniProtKB-KW"/>
</dbReference>
<dbReference type="GO" id="GO:0030431">
    <property type="term" value="P:sleep"/>
    <property type="evidence" value="ECO:0000316"/>
    <property type="project" value="FlyBase"/>
</dbReference>
<dbReference type="CDD" id="cd23595">
    <property type="entry name" value="TFP_LU_ECD_Qvr"/>
    <property type="match status" value="1"/>
</dbReference>
<dbReference type="InterPro" id="IPR031424">
    <property type="entry name" value="QVR-like"/>
</dbReference>
<dbReference type="InterPro" id="IPR050975">
    <property type="entry name" value="Sleep_regulator"/>
</dbReference>
<dbReference type="PANTHER" id="PTHR33562">
    <property type="entry name" value="ATILLA, ISOFORM B-RELATED-RELATED"/>
    <property type="match status" value="1"/>
</dbReference>
<dbReference type="PANTHER" id="PTHR33562:SF31">
    <property type="entry name" value="PROTEIN QUIVER"/>
    <property type="match status" value="1"/>
</dbReference>
<dbReference type="Pfam" id="PF17064">
    <property type="entry name" value="QVR"/>
    <property type="match status" value="1"/>
</dbReference>
<gene>
    <name evidence="14 18" type="primary">qvr</name>
    <name evidence="13" type="synonym">sss</name>
    <name evidence="18" type="ORF">CG33472</name>
</gene>
<evidence type="ECO:0000255" key="1"/>
<evidence type="ECO:0000255" key="2">
    <source>
        <dbReference type="PROSITE-ProRule" id="PRU00498"/>
    </source>
</evidence>
<evidence type="ECO:0000269" key="3">
    <source>
    </source>
</evidence>
<evidence type="ECO:0000269" key="4">
    <source>
    </source>
</evidence>
<evidence type="ECO:0000269" key="5">
    <source>
    </source>
</evidence>
<evidence type="ECO:0000269" key="6">
    <source>
    </source>
</evidence>
<evidence type="ECO:0000269" key="7">
    <source>
    </source>
</evidence>
<evidence type="ECO:0000269" key="8">
    <source>
    </source>
</evidence>
<evidence type="ECO:0000269" key="9">
    <source>
    </source>
</evidence>
<evidence type="ECO:0000269" key="10">
    <source>
    </source>
</evidence>
<evidence type="ECO:0000269" key="11">
    <source>
    </source>
</evidence>
<evidence type="ECO:0000269" key="12">
    <source>
    </source>
</evidence>
<evidence type="ECO:0000303" key="13">
    <source>
    </source>
</evidence>
<evidence type="ECO:0000303" key="14">
    <source>
    </source>
</evidence>
<evidence type="ECO:0000305" key="15"/>
<evidence type="ECO:0000305" key="16">
    <source>
    </source>
</evidence>
<evidence type="ECO:0000305" key="17">
    <source>
    </source>
</evidence>
<evidence type="ECO:0000312" key="18">
    <source>
        <dbReference type="FlyBase" id="FBgn0260499"/>
    </source>
</evidence>
<evidence type="ECO:0000312" key="19">
    <source>
        <dbReference type="Proteomes" id="UP000000803"/>
    </source>
</evidence>
<name>QVR_DROME</name>
<feature type="signal peptide" evidence="1">
    <location>
        <begin position="1"/>
        <end position="32"/>
    </location>
</feature>
<feature type="chain" id="PRO_0000359760" description="UPAR/Ly6 domain-containing protein qvr" evidence="1">
    <location>
        <begin position="33"/>
        <end position="127"/>
    </location>
</feature>
<feature type="propeptide" id="PRO_0000459821" description="Removed in mature form" evidence="17">
    <location>
        <begin position="128"/>
        <end position="158"/>
    </location>
</feature>
<feature type="topological domain" description="Extracellular" evidence="15">
    <location>
        <begin position="33"/>
        <end position="135"/>
    </location>
</feature>
<feature type="transmembrane region" description="Helical" evidence="1">
    <location>
        <begin position="136"/>
        <end position="156"/>
    </location>
</feature>
<feature type="topological domain" description="Cytoplasmic" evidence="15">
    <location>
        <begin position="157"/>
        <end position="158"/>
    </location>
</feature>
<feature type="region of interest" description="Loop 1; may be required for cell surface localization or be essential for protein folding" evidence="10">
    <location>
        <begin position="54"/>
        <end position="67"/>
    </location>
</feature>
<feature type="region of interest" description="Loop 2; required for interaction with Sh/shaker and nAChRalpha3/Nicotinic acetylcholine receptor alpha3" evidence="10">
    <location>
        <begin position="77"/>
        <end position="91"/>
    </location>
</feature>
<feature type="lipid moiety-binding region" description="GPI-anchor amidated asparagine" evidence="17">
    <location>
        <position position="127"/>
    </location>
</feature>
<feature type="glycosylation site" description="N-linked (GlcNAc...) asparagine" evidence="2 10">
    <location>
        <position position="57"/>
    </location>
</feature>
<feature type="disulfide bond" evidence="15">
    <location>
        <begin position="41"/>
        <end position="75"/>
    </location>
</feature>
<feature type="disulfide bond" evidence="15">
    <location>
        <begin position="44"/>
        <end position="52"/>
    </location>
</feature>
<feature type="disulfide bond" evidence="15">
    <location>
        <begin position="71"/>
        <end position="93"/>
    </location>
</feature>
<feature type="disulfide bond" evidence="15">
    <location>
        <begin position="108"/>
        <end position="119"/>
    </location>
</feature>
<feature type="disulfide bond" evidence="15">
    <location>
        <begin position="121"/>
        <end position="126"/>
    </location>
</feature>
<feature type="sequence conflict" description="In Ref. 1; ACF58241." evidence="15" ref="1">
    <original>MESSGNGH</original>
    <variation>VEGSGSGR</variation>
    <location>
        <begin position="110"/>
        <end position="117"/>
    </location>
</feature>
<comment type="function">
    <text evidence="3 4 5 6 7 9 10 11">Bifunctional regulator of neuronal activity in the mushroom body, and possibly other regions of the brain, that acts as a signaling molecule required for homeostatic regulation of sleep under normal conditions and after sleep deprivation (PubMed:18635795, PubMed:20010822, PubMed:24613312). Reduces neuronal excitability by enhancing Sh/shaker K(+) channel activity; possibly by stabilizing Sh/shaker to increase protein levels, accelerating its activation kinetics, slowing C-type inactivation and enhancing recovery from inactivation (PubMed:10934243, PubMed:18635795, PubMed:20010822, PubMed:20429677, PubMed:21813698, PubMed:24613312). Specifically affects the A-type K(+) current (PubMed:10934243). Antagonizes nicotinic acetylcholine receptors (nAChRs) to reduce synaptic transmission, possibly by preventing their localization to the cell surface (PubMed:24613312, PubMed:26828958). Required for regulation of neuromuscular excitability and plasticity at neuromuscular junctions (PubMed:29117754).</text>
</comment>
<comment type="subunit">
    <text evidence="5 9 10">Interacts (via loop 2 of the three-fingered Ly-6 domain) with Sh/shaker; this interaction may stabilize both components of the complex and may be required for targeting or retention of Sh/shaker to neural cell projections (PubMed:20010822, PubMed:24613312, PubMed:26828958). Interacts (via loop 2 of the three-fingered Ly-6 domain) with nAChRalpha3 and potentially other nicotinic acetylcholine receptors; this interaction is required for antagonism of nicotinic acetylcholine receptors (PubMed:24613312, PubMed:26828958).</text>
</comment>
<comment type="subcellular location">
    <subcellularLocation>
        <location evidence="4">Cell membrane</location>
        <topology evidence="4">Lipid-anchor</topology>
        <topology evidence="4">GPI-anchor</topology>
        <orientation evidence="10">Extracellular side</orientation>
    </subcellularLocation>
    <subcellularLocation>
        <location evidence="7">Membrane raft</location>
        <topology evidence="4">Lipid-anchor</topology>
        <topology evidence="4">GPI-anchor</topology>
        <orientation evidence="10">Extracellular side</orientation>
    </subcellularLocation>
</comment>
<comment type="tissue specificity">
    <text evidence="4 5 9">Expressed in mushroom body (at protein level); overlaps with expression of Sh/shaker and nicotinic acetylcholine receptor (nAChR) components also involved in sleep regulation (PubMed:24613312). Expressed in the adult brain and head (PubMed:18635795, PubMed:20010822). Enriched in the mushroom body, anterior optic tubercle, superior protocerebrum, antennal nerve and visual projection neuron fibers projecting into the lobula plate of the optic lobe (PubMed:20010822).</text>
</comment>
<comment type="domain">
    <text evidence="9 10 16 17">Consists of a single Ly-6 domain, adopting a three finger fold stabilized by 5 disulfide bonds (Probable). The first loop contains a region essential for protein folding or that is required for localization to the cell surface (PubMed:26828958). The second loop mediates protein-protein interactions (PubMed:24613312, PubMed:26828958).</text>
</comment>
<comment type="PTM">
    <text evidence="4 10">N-glycosylated probably on Asn-57.</text>
</comment>
<comment type="disruption phenotype">
    <text evidence="3 4 8 11 12">Hypersensitivity to reactive oxygen species generated by the redox-cycling agent paraquat (PubMed:10934243, PubMed:8776866). Vigorous leg shaking, abdomen pulsation, and body shuddering in adult flies under ether-induced anasthesia (PubMed:29117754, PubMed:8776866). Both daytime and nighttime sleep are severely reduced in males and females (PubMed:18635795). A small percentage of flies (around 9%) do not sleep at all (PubMed:18635795). A moderate reduction has minimal effects on baseline sleep but markedly reduces the amount of recovery sleep after sleep deprivation (PubMed:18635795). Mutants have impaired Sh-dependent K(+) current (PubMed:18635795). Weakened climbing ability of adult flies (PubMed:29117754). Neuromuscular hyperexcitability and mild synaptic overgrowth at larval neuromuscular junctions (PubMed:10934243, PubMed:29117754). Disrupted regulation of the diurnal cycle of germline stem cell replication in males (PubMed:24516136).</text>
</comment>
<comment type="similarity">
    <text evidence="15">Belongs to the quiver family.</text>
</comment>
<comment type="sequence caution" evidence="15">
    <conflict type="miscellaneous discrepancy">
        <sequence resource="EMBL-CDS" id="AAL90233"/>
    </conflict>
    <text>Several sequencing errors.</text>
</comment>
<comment type="online information" name="Protein Spotlight">
    <link uri="https://www.proteinspotlight.org/back_issues/101"/>
    <text>Sleepless nights - Issue 101 of January 2009</text>
</comment>
<proteinExistence type="evidence at protein level"/>
<protein>
    <recommendedName>
        <fullName evidence="15">UPAR/Ly6 domain-containing protein qvr</fullName>
    </recommendedName>
    <alternativeName>
        <fullName evidence="14">Protein quiver</fullName>
    </alternativeName>
    <alternativeName>
        <fullName evidence="13">Protein sleepless</fullName>
    </alternativeName>
</protein>